<reference key="1">
    <citation type="journal article" date="2008" name="J. Bacteriol.">
        <title>Genome sequence of the streptomycin-producing microorganism Streptomyces griseus IFO 13350.</title>
        <authorList>
            <person name="Ohnishi Y."/>
            <person name="Ishikawa J."/>
            <person name="Hara H."/>
            <person name="Suzuki H."/>
            <person name="Ikenoya M."/>
            <person name="Ikeda H."/>
            <person name="Yamashita A."/>
            <person name="Hattori M."/>
            <person name="Horinouchi S."/>
        </authorList>
    </citation>
    <scope>NUCLEOTIDE SEQUENCE [LARGE SCALE GENOMIC DNA]</scope>
    <source>
        <strain>JCM 4626 / CBS 651.72 / NBRC 13350 / KCC S-0626 / ISP 5235</strain>
    </source>
</reference>
<organism>
    <name type="scientific">Streptomyces griseus subsp. griseus (strain JCM 4626 / CBS 651.72 / NBRC 13350 / KCC S-0626 / ISP 5235)</name>
    <dbReference type="NCBI Taxonomy" id="455632"/>
    <lineage>
        <taxon>Bacteria</taxon>
        <taxon>Bacillati</taxon>
        <taxon>Actinomycetota</taxon>
        <taxon>Actinomycetes</taxon>
        <taxon>Kitasatosporales</taxon>
        <taxon>Streptomycetaceae</taxon>
        <taxon>Streptomyces</taxon>
    </lineage>
</organism>
<name>MOAC_STRGG</name>
<proteinExistence type="inferred from homology"/>
<gene>
    <name evidence="1" type="primary">moaC</name>
    <name type="ordered locus">SGR_4298</name>
</gene>
<protein>
    <recommendedName>
        <fullName evidence="1">Cyclic pyranopterin monophosphate synthase</fullName>
        <ecNumber evidence="1">4.6.1.17</ecNumber>
    </recommendedName>
    <alternativeName>
        <fullName evidence="1">Molybdenum cofactor biosynthesis protein C</fullName>
    </alternativeName>
</protein>
<dbReference type="EC" id="4.6.1.17" evidence="1"/>
<dbReference type="EMBL" id="AP009493">
    <property type="protein sequence ID" value="BAG21127.1"/>
    <property type="molecule type" value="Genomic_DNA"/>
</dbReference>
<dbReference type="SMR" id="B1VTN7"/>
<dbReference type="KEGG" id="sgr:SGR_4298"/>
<dbReference type="eggNOG" id="COG0315">
    <property type="taxonomic scope" value="Bacteria"/>
</dbReference>
<dbReference type="HOGENOM" id="CLU_074693_1_1_11"/>
<dbReference type="UniPathway" id="UPA00344"/>
<dbReference type="Proteomes" id="UP000001685">
    <property type="component" value="Chromosome"/>
</dbReference>
<dbReference type="GO" id="GO:0061799">
    <property type="term" value="F:cyclic pyranopterin monophosphate synthase activity"/>
    <property type="evidence" value="ECO:0007669"/>
    <property type="project" value="UniProtKB-UniRule"/>
</dbReference>
<dbReference type="GO" id="GO:0006777">
    <property type="term" value="P:Mo-molybdopterin cofactor biosynthetic process"/>
    <property type="evidence" value="ECO:0007669"/>
    <property type="project" value="UniProtKB-UniRule"/>
</dbReference>
<dbReference type="CDD" id="cd01420">
    <property type="entry name" value="MoaC_PE"/>
    <property type="match status" value="1"/>
</dbReference>
<dbReference type="Gene3D" id="3.30.70.640">
    <property type="entry name" value="Molybdopterin cofactor biosynthesis C (MoaC) domain"/>
    <property type="match status" value="1"/>
</dbReference>
<dbReference type="HAMAP" id="MF_01224_B">
    <property type="entry name" value="MoaC_B"/>
    <property type="match status" value="1"/>
</dbReference>
<dbReference type="InterPro" id="IPR023045">
    <property type="entry name" value="MoaC"/>
</dbReference>
<dbReference type="InterPro" id="IPR047594">
    <property type="entry name" value="MoaC_bact/euk"/>
</dbReference>
<dbReference type="InterPro" id="IPR036522">
    <property type="entry name" value="MoaC_sf"/>
</dbReference>
<dbReference type="InterPro" id="IPR050105">
    <property type="entry name" value="MoCo_biosynth_MoaA/MoaC"/>
</dbReference>
<dbReference type="InterPro" id="IPR002820">
    <property type="entry name" value="Mopterin_CF_biosynth-C_dom"/>
</dbReference>
<dbReference type="NCBIfam" id="TIGR00581">
    <property type="entry name" value="moaC"/>
    <property type="match status" value="1"/>
</dbReference>
<dbReference type="NCBIfam" id="NF006870">
    <property type="entry name" value="PRK09364.1"/>
    <property type="match status" value="1"/>
</dbReference>
<dbReference type="PANTHER" id="PTHR22960:SF29">
    <property type="entry name" value="CYCLIC PYRANOPTERIN MONOPHOSPHATE SYNTHASE"/>
    <property type="match status" value="1"/>
</dbReference>
<dbReference type="PANTHER" id="PTHR22960">
    <property type="entry name" value="MOLYBDOPTERIN COFACTOR SYNTHESIS PROTEIN A"/>
    <property type="match status" value="1"/>
</dbReference>
<dbReference type="Pfam" id="PF01967">
    <property type="entry name" value="MoaC"/>
    <property type="match status" value="1"/>
</dbReference>
<dbReference type="SUPFAM" id="SSF55040">
    <property type="entry name" value="Molybdenum cofactor biosynthesis protein C, MoaC"/>
    <property type="match status" value="1"/>
</dbReference>
<evidence type="ECO:0000255" key="1">
    <source>
        <dbReference type="HAMAP-Rule" id="MF_01224"/>
    </source>
</evidence>
<feature type="chain" id="PRO_1000139300" description="Cyclic pyranopterin monophosphate synthase">
    <location>
        <begin position="1"/>
        <end position="177"/>
    </location>
</feature>
<feature type="active site" evidence="1">
    <location>
        <position position="140"/>
    </location>
</feature>
<feature type="binding site" evidence="1">
    <location>
        <begin position="89"/>
        <end position="91"/>
    </location>
    <ligand>
        <name>substrate</name>
    </ligand>
</feature>
<feature type="binding site" evidence="1">
    <location>
        <begin position="125"/>
        <end position="126"/>
    </location>
    <ligand>
        <name>substrate</name>
    </ligand>
</feature>
<keyword id="KW-0456">Lyase</keyword>
<keyword id="KW-0501">Molybdenum cofactor biosynthesis</keyword>
<accession>B1VTN7</accession>
<comment type="function">
    <text evidence="1">Catalyzes the conversion of (8S)-3',8-cyclo-7,8-dihydroguanosine 5'-triphosphate to cyclic pyranopterin monophosphate (cPMP).</text>
</comment>
<comment type="catalytic activity">
    <reaction evidence="1">
        <text>(8S)-3',8-cyclo-7,8-dihydroguanosine 5'-triphosphate = cyclic pyranopterin phosphate + diphosphate</text>
        <dbReference type="Rhea" id="RHEA:49580"/>
        <dbReference type="ChEBI" id="CHEBI:33019"/>
        <dbReference type="ChEBI" id="CHEBI:59648"/>
        <dbReference type="ChEBI" id="CHEBI:131766"/>
        <dbReference type="EC" id="4.6.1.17"/>
    </reaction>
</comment>
<comment type="pathway">
    <text evidence="1">Cofactor biosynthesis; molybdopterin biosynthesis.</text>
</comment>
<comment type="subunit">
    <text evidence="1">Homohexamer; trimer of dimers.</text>
</comment>
<comment type="similarity">
    <text evidence="1">Belongs to the MoaC family.</text>
</comment>
<sequence length="177" mass="18442">MTGAPSARRSELSTQNRLTHIDETGAARMVDVSQKDVTTRLARASGRVLVSPRVIELLRGEGVPKGDALATARIAGIMGAKRTPDLIPLCHPLAVSGVEVELGVADDAVEITATVKTTDRTGVEMEALTAVSVAALTVIDMVKAVDKSAVITDVRVEAKSGGKSGDYRRTAPEGPDA</sequence>